<protein>
    <recommendedName>
        <fullName evidence="6">Phospholipase A2</fullName>
        <ecNumber>3.1.1.4</ecNumber>
    </recommendedName>
    <alternativeName>
        <fullName evidence="1">Group IB phospholipase A2</fullName>
    </alternativeName>
    <alternativeName>
        <fullName>Phosphatidylcholine 2-acylhydrolase 1B</fullName>
    </alternativeName>
</protein>
<comment type="function">
    <text evidence="5">PA2 catalyzes the calcium-dependent hydrolysis of the 2-acyl groups in 3-sn-phosphoglycerides.</text>
</comment>
<comment type="catalytic activity">
    <reaction evidence="3 4 5">
        <text>a 1,2-diacyl-sn-glycero-3-phosphocholine + H2O = a 1-acyl-sn-glycero-3-phosphocholine + a fatty acid + H(+)</text>
        <dbReference type="Rhea" id="RHEA:15801"/>
        <dbReference type="ChEBI" id="CHEBI:15377"/>
        <dbReference type="ChEBI" id="CHEBI:15378"/>
        <dbReference type="ChEBI" id="CHEBI:28868"/>
        <dbReference type="ChEBI" id="CHEBI:57643"/>
        <dbReference type="ChEBI" id="CHEBI:58168"/>
        <dbReference type="EC" id="3.1.1.4"/>
    </reaction>
</comment>
<comment type="cofactor">
    <cofactor evidence="1 5">
        <name>Ca(2+)</name>
        <dbReference type="ChEBI" id="CHEBI:29108"/>
    </cofactor>
    <text evidence="1 5">Binds 1 Ca(2+) ion per subunit.</text>
</comment>
<comment type="biophysicochemical properties">
    <phDependence>
        <text evidence="5">Optimum pH is 8.2. Stable when incubated for 10 minutes between pH 2 and 11. Retains 70% of its activity when incubated for 10 minutes at pH 1.5.</text>
    </phDependence>
    <temperatureDependence>
        <text evidence="5">Stable after incubation at 70 degrees Celsius for 10 minutes. Retains 80% of its activity after incubation at 80 degrees Celsius for 20 minutes.</text>
    </temperatureDependence>
</comment>
<comment type="subcellular location">
    <subcellularLocation>
        <location evidence="7">Secreted</location>
    </subcellularLocation>
</comment>
<comment type="similarity">
    <text evidence="2">Belongs to the phospholipase A2 family.</text>
</comment>
<reference evidence="7" key="1">
    <citation type="journal article" date="2007" name="J. Chromatogr. B">
        <title>Ostrich pancreatic phospholipase A(2): purification and biochemical characterization.</title>
        <authorList>
            <person name="Ben Bacha A."/>
            <person name="Gargouri Y."/>
            <person name="Bezzine S."/>
            <person name="Mosbah H."/>
            <person name="Mejdoub H."/>
        </authorList>
    </citation>
    <scope>PROTEIN SEQUENCE</scope>
    <scope>FUNCTION</scope>
    <scope>CATALYTIC ACTIVITY</scope>
    <scope>COFACTOR</scope>
    <scope>BIOPHYSICOCHEMICAL PROPERTIES</scope>
    <source>
        <tissue evidence="5">Pancreas</tissue>
    </source>
</reference>
<gene>
    <name evidence="1" type="primary">PLA2G1B</name>
</gene>
<name>PA21B_STRCA</name>
<evidence type="ECO:0000250" key="1">
    <source>
        <dbReference type="UniProtKB" id="Q9Z0Y2"/>
    </source>
</evidence>
<evidence type="ECO:0000255" key="2"/>
<evidence type="ECO:0000255" key="3">
    <source>
        <dbReference type="PROSITE-ProRule" id="PRU10035"/>
    </source>
</evidence>
<evidence type="ECO:0000255" key="4">
    <source>
        <dbReference type="PROSITE-ProRule" id="PRU10036"/>
    </source>
</evidence>
<evidence type="ECO:0000269" key="5">
    <source>
    </source>
</evidence>
<evidence type="ECO:0000303" key="6">
    <source>
    </source>
</evidence>
<evidence type="ECO:0000305" key="7"/>
<sequence>AVWQFREMIKCTIPPSDDLLDF</sequence>
<keyword id="KW-0106">Calcium</keyword>
<keyword id="KW-0903">Direct protein sequencing</keyword>
<keyword id="KW-0378">Hydrolase</keyword>
<keyword id="KW-0442">Lipid degradation</keyword>
<keyword id="KW-0443">Lipid metabolism</keyword>
<keyword id="KW-0479">Metal-binding</keyword>
<keyword id="KW-0964">Secreted</keyword>
<dbReference type="EC" id="3.1.1.4"/>
<dbReference type="GO" id="GO:0005576">
    <property type="term" value="C:extracellular region"/>
    <property type="evidence" value="ECO:0000314"/>
    <property type="project" value="UniProtKB"/>
</dbReference>
<dbReference type="GO" id="GO:0005509">
    <property type="term" value="F:calcium ion binding"/>
    <property type="evidence" value="ECO:0000314"/>
    <property type="project" value="UniProtKB"/>
</dbReference>
<dbReference type="GO" id="GO:0004623">
    <property type="term" value="F:phospholipase A2 activity"/>
    <property type="evidence" value="ECO:0000314"/>
    <property type="project" value="UniProtKB"/>
</dbReference>
<dbReference type="GO" id="GO:0016042">
    <property type="term" value="P:lipid catabolic process"/>
    <property type="evidence" value="ECO:0007669"/>
    <property type="project" value="UniProtKB-KW"/>
</dbReference>
<accession>P86043</accession>
<organism>
    <name type="scientific">Struthio camelus</name>
    <name type="common">Common ostrich</name>
    <dbReference type="NCBI Taxonomy" id="8801"/>
    <lineage>
        <taxon>Eukaryota</taxon>
        <taxon>Metazoa</taxon>
        <taxon>Chordata</taxon>
        <taxon>Craniata</taxon>
        <taxon>Vertebrata</taxon>
        <taxon>Euteleostomi</taxon>
        <taxon>Archelosauria</taxon>
        <taxon>Archosauria</taxon>
        <taxon>Dinosauria</taxon>
        <taxon>Saurischia</taxon>
        <taxon>Theropoda</taxon>
        <taxon>Coelurosauria</taxon>
        <taxon>Aves</taxon>
        <taxon>Palaeognathae</taxon>
        <taxon>Struthioniformes</taxon>
        <taxon>Struthionidae</taxon>
        <taxon>Struthio</taxon>
    </lineage>
</organism>
<feature type="chain" id="PRO_0000352758" description="Phospholipase A2">
    <location>
        <begin position="1"/>
        <end position="22" status="greater than"/>
    </location>
</feature>
<feature type="non-terminal residue" evidence="6">
    <location>
        <position position="22"/>
    </location>
</feature>
<proteinExistence type="evidence at protein level"/>